<sequence length="81" mass="8714">MSHSVKIYDTCIGCTQCVRACPTDVLEMVPWGGCKAAQIASAPRTEDCVGCKRCESACPTDFLSVRVYLGAETTRSMGLAY</sequence>
<reference key="1">
    <citation type="journal article" date="1999" name="Proc. Natl. Acad. Sci. U.S.A.">
        <title>The complete chloroplast DNA sequence of the green alga Nephroselmis olivacea: insights into the architecture of ancestral chloroplast genomes.</title>
        <authorList>
            <person name="Turmel M."/>
            <person name="Otis C."/>
            <person name="Lemieux C."/>
        </authorList>
    </citation>
    <scope>NUCLEOTIDE SEQUENCE [LARGE SCALE GENOMIC DNA]</scope>
    <source>
        <strain>NIES-484 / S-N-5-8</strain>
    </source>
</reference>
<gene>
    <name evidence="2" type="primary">psaC</name>
</gene>
<comment type="function">
    <text evidence="2">Apoprotein for the two 4Fe-4S centers FA and FB of photosystem I (PSI); essential for photochemical activity. FB is the terminal electron acceptor of PSI, donating electrons to ferredoxin. The C-terminus interacts with PsaA/B/D and helps assemble the protein into the PSI complex. Required for binding of PsaD and PsaE to PSI. PSI is a plastocyanin/cytochrome c6-ferredoxin oxidoreductase, converting photonic excitation into a charge separation, which transfers an electron from the donor P700 chlorophyll pair to the spectroscopically characterized acceptors A0, A1, FX, FA and FB in turn.</text>
</comment>
<comment type="catalytic activity">
    <reaction evidence="2">
        <text>reduced [plastocyanin] + hnu + oxidized [2Fe-2S]-[ferredoxin] = oxidized [plastocyanin] + reduced [2Fe-2S]-[ferredoxin]</text>
        <dbReference type="Rhea" id="RHEA:30407"/>
        <dbReference type="Rhea" id="RHEA-COMP:10000"/>
        <dbReference type="Rhea" id="RHEA-COMP:10001"/>
        <dbReference type="Rhea" id="RHEA-COMP:10039"/>
        <dbReference type="Rhea" id="RHEA-COMP:10040"/>
        <dbReference type="ChEBI" id="CHEBI:29036"/>
        <dbReference type="ChEBI" id="CHEBI:30212"/>
        <dbReference type="ChEBI" id="CHEBI:33737"/>
        <dbReference type="ChEBI" id="CHEBI:33738"/>
        <dbReference type="ChEBI" id="CHEBI:49552"/>
        <dbReference type="EC" id="1.97.1.12"/>
    </reaction>
</comment>
<comment type="cofactor">
    <cofactor evidence="2">
        <name>[4Fe-4S] cluster</name>
        <dbReference type="ChEBI" id="CHEBI:49883"/>
    </cofactor>
    <text evidence="2">Binds 2 [4Fe-4S] clusters. Cluster 2 is most probably the spectroscopically characterized electron acceptor FA and cluster 1 is most probably FB.</text>
</comment>
<comment type="subunit">
    <text evidence="2">The eukaryotic PSI reaction center is composed of at least 11 subunits.</text>
</comment>
<comment type="subcellular location">
    <subcellularLocation>
        <location evidence="2">Plastid</location>
        <location evidence="2">Chloroplast thylakoid membrane</location>
        <topology evidence="2">Peripheral membrane protein</topology>
        <orientation evidence="2">Stromal side</orientation>
    </subcellularLocation>
</comment>
<name>PSAC_NEPOL</name>
<evidence type="ECO:0000250" key="1"/>
<evidence type="ECO:0000255" key="2">
    <source>
        <dbReference type="HAMAP-Rule" id="MF_01303"/>
    </source>
</evidence>
<dbReference type="EC" id="1.97.1.12" evidence="2"/>
<dbReference type="EMBL" id="AF137379">
    <property type="protein sequence ID" value="AAD54888.1"/>
    <property type="molecule type" value="Genomic_DNA"/>
</dbReference>
<dbReference type="RefSeq" id="NP_050917.1">
    <property type="nucleotide sequence ID" value="NC_000927.1"/>
</dbReference>
<dbReference type="SMR" id="Q9TKV9"/>
<dbReference type="GeneID" id="802051"/>
<dbReference type="GO" id="GO:0009535">
    <property type="term" value="C:chloroplast thylakoid membrane"/>
    <property type="evidence" value="ECO:0007669"/>
    <property type="project" value="UniProtKB-SubCell"/>
</dbReference>
<dbReference type="GO" id="GO:0009522">
    <property type="term" value="C:photosystem I"/>
    <property type="evidence" value="ECO:0007669"/>
    <property type="project" value="UniProtKB-KW"/>
</dbReference>
<dbReference type="GO" id="GO:0051539">
    <property type="term" value="F:4 iron, 4 sulfur cluster binding"/>
    <property type="evidence" value="ECO:0007669"/>
    <property type="project" value="UniProtKB-KW"/>
</dbReference>
<dbReference type="GO" id="GO:0009055">
    <property type="term" value="F:electron transfer activity"/>
    <property type="evidence" value="ECO:0007669"/>
    <property type="project" value="UniProtKB-UniRule"/>
</dbReference>
<dbReference type="GO" id="GO:0046872">
    <property type="term" value="F:metal ion binding"/>
    <property type="evidence" value="ECO:0007669"/>
    <property type="project" value="UniProtKB-KW"/>
</dbReference>
<dbReference type="GO" id="GO:0016491">
    <property type="term" value="F:oxidoreductase activity"/>
    <property type="evidence" value="ECO:0007669"/>
    <property type="project" value="UniProtKB-KW"/>
</dbReference>
<dbReference type="GO" id="GO:0009773">
    <property type="term" value="P:photosynthetic electron transport in photosystem I"/>
    <property type="evidence" value="ECO:0007669"/>
    <property type="project" value="InterPro"/>
</dbReference>
<dbReference type="FunFam" id="3.30.70.20:FF:000001">
    <property type="entry name" value="Photosystem I iron-sulfur center"/>
    <property type="match status" value="1"/>
</dbReference>
<dbReference type="Gene3D" id="3.30.70.20">
    <property type="match status" value="1"/>
</dbReference>
<dbReference type="HAMAP" id="MF_01303">
    <property type="entry name" value="PSI_PsaC"/>
    <property type="match status" value="1"/>
</dbReference>
<dbReference type="InterPro" id="IPR017896">
    <property type="entry name" value="4Fe4S_Fe-S-bd"/>
</dbReference>
<dbReference type="InterPro" id="IPR017900">
    <property type="entry name" value="4Fe4S_Fe_S_CS"/>
</dbReference>
<dbReference type="InterPro" id="IPR050157">
    <property type="entry name" value="PSI_iron-sulfur_center"/>
</dbReference>
<dbReference type="InterPro" id="IPR017491">
    <property type="entry name" value="PSI_PsaC"/>
</dbReference>
<dbReference type="NCBIfam" id="TIGR03048">
    <property type="entry name" value="PS_I_psaC"/>
    <property type="match status" value="1"/>
</dbReference>
<dbReference type="PANTHER" id="PTHR24960:SF79">
    <property type="entry name" value="PHOTOSYSTEM I IRON-SULFUR CENTER"/>
    <property type="match status" value="1"/>
</dbReference>
<dbReference type="PANTHER" id="PTHR24960">
    <property type="entry name" value="PHOTOSYSTEM I IRON-SULFUR CENTER-RELATED"/>
    <property type="match status" value="1"/>
</dbReference>
<dbReference type="Pfam" id="PF12838">
    <property type="entry name" value="Fer4_7"/>
    <property type="match status" value="1"/>
</dbReference>
<dbReference type="SUPFAM" id="SSF54862">
    <property type="entry name" value="4Fe-4S ferredoxins"/>
    <property type="match status" value="1"/>
</dbReference>
<dbReference type="PROSITE" id="PS00198">
    <property type="entry name" value="4FE4S_FER_1"/>
    <property type="match status" value="2"/>
</dbReference>
<dbReference type="PROSITE" id="PS51379">
    <property type="entry name" value="4FE4S_FER_2"/>
    <property type="match status" value="2"/>
</dbReference>
<accession>Q9TKV9</accession>
<proteinExistence type="inferred from homology"/>
<protein>
    <recommendedName>
        <fullName evidence="2">Photosystem I iron-sulfur center</fullName>
        <ecNumber evidence="2">1.97.1.12</ecNumber>
    </recommendedName>
    <alternativeName>
        <fullName evidence="2">9 kDa polypeptide</fullName>
    </alternativeName>
    <alternativeName>
        <fullName evidence="2">PSI-C</fullName>
    </alternativeName>
    <alternativeName>
        <fullName evidence="2">Photosystem I subunit VII</fullName>
    </alternativeName>
    <alternativeName>
        <fullName evidence="2">PsaC</fullName>
    </alternativeName>
</protein>
<geneLocation type="chloroplast"/>
<feature type="initiator methionine" description="Removed" evidence="1">
    <location>
        <position position="1"/>
    </location>
</feature>
<feature type="chain" id="PRO_0000061990" description="Photosystem I iron-sulfur center">
    <location>
        <begin position="2"/>
        <end position="81"/>
    </location>
</feature>
<feature type="domain" description="4Fe-4S ferredoxin-type 1" evidence="2">
    <location>
        <begin position="2"/>
        <end position="31"/>
    </location>
</feature>
<feature type="domain" description="4Fe-4S ferredoxin-type 2" evidence="2">
    <location>
        <begin position="39"/>
        <end position="68"/>
    </location>
</feature>
<feature type="binding site" evidence="2">
    <location>
        <position position="11"/>
    </location>
    <ligand>
        <name>[4Fe-4S] cluster</name>
        <dbReference type="ChEBI" id="CHEBI:49883"/>
        <label>1</label>
    </ligand>
</feature>
<feature type="binding site" evidence="2">
    <location>
        <position position="14"/>
    </location>
    <ligand>
        <name>[4Fe-4S] cluster</name>
        <dbReference type="ChEBI" id="CHEBI:49883"/>
        <label>1</label>
    </ligand>
</feature>
<feature type="binding site" evidence="2">
    <location>
        <position position="17"/>
    </location>
    <ligand>
        <name>[4Fe-4S] cluster</name>
        <dbReference type="ChEBI" id="CHEBI:49883"/>
        <label>1</label>
    </ligand>
</feature>
<feature type="binding site" evidence="2">
    <location>
        <position position="21"/>
    </location>
    <ligand>
        <name>[4Fe-4S] cluster</name>
        <dbReference type="ChEBI" id="CHEBI:49883"/>
        <label>2</label>
    </ligand>
</feature>
<feature type="binding site" evidence="2">
    <location>
        <position position="48"/>
    </location>
    <ligand>
        <name>[4Fe-4S] cluster</name>
        <dbReference type="ChEBI" id="CHEBI:49883"/>
        <label>2</label>
    </ligand>
</feature>
<feature type="binding site" evidence="2">
    <location>
        <position position="51"/>
    </location>
    <ligand>
        <name>[4Fe-4S] cluster</name>
        <dbReference type="ChEBI" id="CHEBI:49883"/>
        <label>2</label>
    </ligand>
</feature>
<feature type="binding site" evidence="2">
    <location>
        <position position="54"/>
    </location>
    <ligand>
        <name>[4Fe-4S] cluster</name>
        <dbReference type="ChEBI" id="CHEBI:49883"/>
        <label>2</label>
    </ligand>
</feature>
<feature type="binding site" evidence="2">
    <location>
        <position position="58"/>
    </location>
    <ligand>
        <name>[4Fe-4S] cluster</name>
        <dbReference type="ChEBI" id="CHEBI:49883"/>
        <label>1</label>
    </ligand>
</feature>
<organism>
    <name type="scientific">Nephroselmis olivacea</name>
    <name type="common">Green alga</name>
    <dbReference type="NCBI Taxonomy" id="31312"/>
    <lineage>
        <taxon>Eukaryota</taxon>
        <taxon>Viridiplantae</taxon>
        <taxon>Chlorophyta</taxon>
        <taxon>Nephroselmidophyceae</taxon>
        <taxon>Nephroselmidales</taxon>
        <taxon>Nephroselmidaceae</taxon>
        <taxon>Nephroselmis</taxon>
    </lineage>
</organism>
<keyword id="KW-0004">4Fe-4S</keyword>
<keyword id="KW-0150">Chloroplast</keyword>
<keyword id="KW-0249">Electron transport</keyword>
<keyword id="KW-0408">Iron</keyword>
<keyword id="KW-0411">Iron-sulfur</keyword>
<keyword id="KW-0472">Membrane</keyword>
<keyword id="KW-0479">Metal-binding</keyword>
<keyword id="KW-0560">Oxidoreductase</keyword>
<keyword id="KW-0602">Photosynthesis</keyword>
<keyword id="KW-0603">Photosystem I</keyword>
<keyword id="KW-0934">Plastid</keyword>
<keyword id="KW-0677">Repeat</keyword>
<keyword id="KW-0793">Thylakoid</keyword>
<keyword id="KW-0813">Transport</keyword>